<name>VIF_HV2ST</name>
<reference key="1">
    <citation type="journal article" date="1990" name="J. Virol.">
        <title>Molecular characterization of an attenuated human immunodeficiency virus type 2 isolate.</title>
        <authorList>
            <person name="Kumar P."/>
            <person name="Hui H."/>
            <person name="Kappes J.C."/>
            <person name="Haggarty B.S."/>
            <person name="Hoxie J.A."/>
            <person name="Arya S.K."/>
            <person name="Shaw G.M."/>
            <person name="Hahn B.H."/>
        </authorList>
    </citation>
    <scope>NUCLEOTIDE SEQUENCE [GENOMIC DNA]</scope>
</reference>
<feature type="chain" id="PRO_0000085325" description="Virion infectivity factor">
    <location>
        <begin position="1"/>
        <end position="215"/>
    </location>
</feature>
<feature type="region of interest" description="Multimerization" evidence="1">
    <location>
        <begin position="154"/>
        <end position="167"/>
    </location>
</feature>
<feature type="short sequence motif" description="HCCH motif" evidence="1">
    <location>
        <begin position="110"/>
        <end position="141"/>
    </location>
</feature>
<feature type="short sequence motif" description="BC-box-like motif" evidence="1">
    <location>
        <begin position="147"/>
        <end position="156"/>
    </location>
</feature>
<feature type="modified residue" description="Phosphothreonine; by host MAP4K1" evidence="1">
    <location>
        <position position="98"/>
    </location>
</feature>
<feature type="modified residue" description="Phosphoserine; by host" evidence="1">
    <location>
        <position position="147"/>
    </location>
</feature>
<evidence type="ECO:0000250" key="1"/>
<evidence type="ECO:0000305" key="2"/>
<organismHost>
    <name type="scientific">Homo sapiens</name>
    <name type="common">Human</name>
    <dbReference type="NCBI Taxonomy" id="9606"/>
</organismHost>
<keyword id="KW-0014">AIDS</keyword>
<keyword id="KW-1032">Host cell membrane</keyword>
<keyword id="KW-1035">Host cytoplasm</keyword>
<keyword id="KW-1043">Host membrane</keyword>
<keyword id="KW-0945">Host-virus interaction</keyword>
<keyword id="KW-0472">Membrane</keyword>
<keyword id="KW-0597">Phosphoprotein</keyword>
<keyword id="KW-0832">Ubl conjugation</keyword>
<keyword id="KW-0833">Ubl conjugation pathway</keyword>
<keyword id="KW-0946">Virion</keyword>
<gene>
    <name type="primary">vif</name>
</gene>
<dbReference type="EMBL" id="M31113">
    <property type="protein sequence ID" value="AAB01353.1"/>
    <property type="molecule type" value="Genomic_DNA"/>
</dbReference>
<dbReference type="PIR" id="C33943">
    <property type="entry name" value="ASLJSW"/>
</dbReference>
<dbReference type="SMR" id="P20878"/>
<dbReference type="Proteomes" id="UP000007713">
    <property type="component" value="Segment"/>
</dbReference>
<dbReference type="GO" id="GO:0030430">
    <property type="term" value="C:host cell cytoplasm"/>
    <property type="evidence" value="ECO:0007669"/>
    <property type="project" value="UniProtKB-SubCell"/>
</dbReference>
<dbReference type="GO" id="GO:0020002">
    <property type="term" value="C:host cell plasma membrane"/>
    <property type="evidence" value="ECO:0007669"/>
    <property type="project" value="UniProtKB-SubCell"/>
</dbReference>
<dbReference type="GO" id="GO:0016020">
    <property type="term" value="C:membrane"/>
    <property type="evidence" value="ECO:0007669"/>
    <property type="project" value="UniProtKB-KW"/>
</dbReference>
<dbReference type="GO" id="GO:0044423">
    <property type="term" value="C:virion component"/>
    <property type="evidence" value="ECO:0007669"/>
    <property type="project" value="UniProtKB-KW"/>
</dbReference>
<dbReference type="GO" id="GO:0019058">
    <property type="term" value="P:viral life cycle"/>
    <property type="evidence" value="ECO:0007669"/>
    <property type="project" value="InterPro"/>
</dbReference>
<dbReference type="InterPro" id="IPR000475">
    <property type="entry name" value="Vif"/>
</dbReference>
<dbReference type="Pfam" id="PF00559">
    <property type="entry name" value="Vif"/>
    <property type="match status" value="1"/>
</dbReference>
<dbReference type="PRINTS" id="PR00349">
    <property type="entry name" value="VIRIONINFFCT"/>
</dbReference>
<comment type="function">
    <text evidence="1">Counteracts the innate antiviral activity of APOBEC3G. Forms a complex with host APOBEC3G thus preventing the entry of this lethally hypermutating enzyme into progeny virions. Functions as an adapter molecule, recruiting APOBEC3G to the ubiquitin-proteasome machinery. Targets APOBEC3G for degradation through the assembly with elongin BC complex, CUL5 and RBX1. Binds viral RNA and affects the stability of viral nucleoprotein core. May play a role in viral morphology (By similarity).</text>
</comment>
<comment type="subunit">
    <text evidence="1">Homomultimer; in vitro and presumably in vivo. Interacts with viral Pr55Gag precursor and human APOBEC3G. The interaction between Vif and APOBEC3G is species-specific, which may play a role in restricting the replication of HIV to humans. Forms an E3 ligase complex by interacting with human CUL5 and elongin BC complex (ELOB and ELOC) (By similarity).</text>
</comment>
<comment type="subcellular location">
    <subcellularLocation>
        <location evidence="1">Host cytoplasm</location>
    </subcellularLocation>
    <subcellularLocation>
        <location evidence="1">Host cell membrane</location>
        <topology evidence="1">Peripheral membrane protein</topology>
        <orientation evidence="1">Cytoplasmic side</orientation>
    </subcellularLocation>
    <subcellularLocation>
        <location evidence="1">Virion</location>
    </subcellularLocation>
    <text evidence="1">In the cytoplasm, seems to colocalize with intermediate filament vimentin. A fraction is associated with the cytoplasmic side of cellular membranes, presumably via the interaction with Pr55Gag precursor (By similarity).</text>
</comment>
<comment type="induction">
    <text>Expressed late during infection in a Rev-dependent manner.</text>
</comment>
<comment type="domain">
    <text evidence="1">The BC-like-box motif mediates the interaction with elongin BC complex.</text>
</comment>
<comment type="domain">
    <text evidence="1">The HCCH motif (H-x(5)-C-x(18)-C-x(5)-H) mediates the interaction with CUL5.</text>
</comment>
<comment type="PTM">
    <text evidence="1">Processed in virion by the viral protease.</text>
</comment>
<comment type="PTM">
    <text evidence="1">Highly phosphorylated on serine and threonine residues.</text>
</comment>
<comment type="PTM">
    <text evidence="1">Polyubiquitinated and degraded by the proteasome in the presence of APOBEC3G.</text>
</comment>
<comment type="miscellaneous">
    <text>Required for replication in 'nonpermissive' cells, including primary T-cells, macrophages and certain T-cell lines, but is dispensable for replication in 'permissive' cell lines, such as 293T cells. In nonpermissive cells, Vif-defective viruses can produce virions, but they fail to complete reverse transcription and cannot successfully infect new cells.</text>
</comment>
<comment type="miscellaneous">
    <text>Vif-defective viruses show catastrophic failure in reverse transcription due to APOBEC-induced mutations that initiate a DNA base repair pathway and compromise the structural integrity of the ssDNA. In the absence of Vif, the virion is morphologically abnormal.</text>
</comment>
<comment type="similarity">
    <text evidence="2">Belongs to the primate lentivirus group Vif protein family.</text>
</comment>
<accession>P20878</accession>
<protein>
    <recommendedName>
        <fullName>Virion infectivity factor</fullName>
        <shortName>Vif</shortName>
    </recommendedName>
    <alternativeName>
        <fullName>Q protein</fullName>
    </alternativeName>
    <alternativeName>
        <fullName>SOR protein</fullName>
    </alternativeName>
</protein>
<sequence length="215" mass="25355">MEEGKRWIAVPTWRVPGRMERWHSLIKYLKYRTGDLEKVCYVPHHKVGWAWWTCSRVIFPLKGESHLEIQAYWNLTPEKGWLSSYSVRLTWYTEKFWTDVTPDCADSLIHSTYFSCFTAGEVRRAIRGEKLLSCCNYPQAHKYQVPSLQFLALVVVQQNGRPQRDNTTRKQWRRNYRRGLRVARQDGRSHKQRGSEPPAPRAYFPGVAKVLEILA</sequence>
<organism>
    <name type="scientific">Human immunodeficiency virus type 2 subtype A (isolate ST)</name>
    <name type="common">HIV-2</name>
    <dbReference type="NCBI Taxonomy" id="11721"/>
    <lineage>
        <taxon>Viruses</taxon>
        <taxon>Riboviria</taxon>
        <taxon>Pararnavirae</taxon>
        <taxon>Artverviricota</taxon>
        <taxon>Revtraviricetes</taxon>
        <taxon>Ortervirales</taxon>
        <taxon>Retroviridae</taxon>
        <taxon>Orthoretrovirinae</taxon>
        <taxon>Lentivirus</taxon>
        <taxon>Human immunodeficiency virus 2</taxon>
    </lineage>
</organism>
<proteinExistence type="evidence at transcript level"/>